<sequence length="477" mass="55240">MFKQILGKLPKKTSAKFWDNGESQTLDNNNNQGGGDEVLSQRTSSNGDTSLDCVSSFDVLPRLRDVSISEKQELFLKKLRLCCLVFDFVAEPQQNFKEKEIKRQTLLEVVDYVISSGNGKFPESVIQEATKMISANLFSNPHRQWKNKTPEALDLEEEEGSLNPSWPHLQIVYEFLLRIVASPNTDPKISKKYIDHTFVLKLLDLFDSEDPREREYLKTILHRIYGRFMVHRPFIRKTMNNILYDFIFETGKHSGIAEFLEVLGSIINGFALPLKEEHKLFLTRVLIPLHKLKCLPNYHQQLSYCVIQFVEKDCKLADTVIRGMLKYWPVTNSAKEIMFLNELEEILEATQLTEFERCMVPLSRQIAQCLSSSHFQVAERALYLWNNDHVTNLVRQNSRIILPIVFPALEKNGSSHWNQAVKNLTENVLKVLSDTNPDLFEECLHKFQEDQQKAEDTKKKNGETWRQLEEIVASMAK</sequence>
<gene>
    <name type="primary">B'DELTA</name>
    <name type="ordered locus">At3g26030</name>
    <name type="ORF">MPE11.23</name>
</gene>
<name>2A5D_ARATH</name>
<dbReference type="EMBL" id="AF062396">
    <property type="protein sequence ID" value="AAD02810.1"/>
    <property type="molecule type" value="mRNA"/>
</dbReference>
<dbReference type="EMBL" id="AB023041">
    <property type="protein sequence ID" value="BAB01066.1"/>
    <property type="molecule type" value="Genomic_DNA"/>
</dbReference>
<dbReference type="EMBL" id="CP002686">
    <property type="protein sequence ID" value="AEE77106.1"/>
    <property type="molecule type" value="Genomic_DNA"/>
</dbReference>
<dbReference type="EMBL" id="AY091037">
    <property type="protein sequence ID" value="AAM13858.1"/>
    <property type="molecule type" value="mRNA"/>
</dbReference>
<dbReference type="EMBL" id="AY117349">
    <property type="protein sequence ID" value="AAM51424.1"/>
    <property type="molecule type" value="mRNA"/>
</dbReference>
<dbReference type="RefSeq" id="NP_189232.1">
    <property type="nucleotide sequence ID" value="NM_113507.3"/>
</dbReference>
<dbReference type="SMR" id="Q9ZQY6"/>
<dbReference type="BioGRID" id="7531">
    <property type="interactions" value="8"/>
</dbReference>
<dbReference type="FunCoup" id="Q9ZQY6">
    <property type="interactions" value="3234"/>
</dbReference>
<dbReference type="IntAct" id="Q9ZQY6">
    <property type="interactions" value="7"/>
</dbReference>
<dbReference type="STRING" id="3702.Q9ZQY6"/>
<dbReference type="PaxDb" id="3702-AT3G26030.1"/>
<dbReference type="ProteomicsDB" id="245134"/>
<dbReference type="EnsemblPlants" id="AT3G26030.1">
    <property type="protein sequence ID" value="AT3G26030.1"/>
    <property type="gene ID" value="AT3G26030"/>
</dbReference>
<dbReference type="GeneID" id="822200"/>
<dbReference type="Gramene" id="AT3G26030.1">
    <property type="protein sequence ID" value="AT3G26030.1"/>
    <property type="gene ID" value="AT3G26030"/>
</dbReference>
<dbReference type="KEGG" id="ath:AT3G26030"/>
<dbReference type="Araport" id="AT3G26030"/>
<dbReference type="TAIR" id="AT3G26030">
    <property type="gene designation" value="ATB' DELTA"/>
</dbReference>
<dbReference type="eggNOG" id="KOG2085">
    <property type="taxonomic scope" value="Eukaryota"/>
</dbReference>
<dbReference type="HOGENOM" id="CLU_012437_4_1_1"/>
<dbReference type="InParanoid" id="Q9ZQY6"/>
<dbReference type="OMA" id="TSAKFWD"/>
<dbReference type="PhylomeDB" id="Q9ZQY6"/>
<dbReference type="PRO" id="PR:Q9ZQY6"/>
<dbReference type="Proteomes" id="UP000006548">
    <property type="component" value="Chromosome 3"/>
</dbReference>
<dbReference type="ExpressionAtlas" id="Q9ZQY6">
    <property type="expression patterns" value="baseline and differential"/>
</dbReference>
<dbReference type="GO" id="GO:0005737">
    <property type="term" value="C:cytoplasm"/>
    <property type="evidence" value="ECO:0007005"/>
    <property type="project" value="TAIR"/>
</dbReference>
<dbReference type="GO" id="GO:0005730">
    <property type="term" value="C:nucleolus"/>
    <property type="evidence" value="ECO:0007005"/>
    <property type="project" value="TAIR"/>
</dbReference>
<dbReference type="GO" id="GO:0000159">
    <property type="term" value="C:protein phosphatase type 2A complex"/>
    <property type="evidence" value="ECO:0007669"/>
    <property type="project" value="InterPro"/>
</dbReference>
<dbReference type="GO" id="GO:0019888">
    <property type="term" value="F:protein phosphatase regulator activity"/>
    <property type="evidence" value="ECO:0007669"/>
    <property type="project" value="InterPro"/>
</dbReference>
<dbReference type="GO" id="GO:0007165">
    <property type="term" value="P:signal transduction"/>
    <property type="evidence" value="ECO:0007669"/>
    <property type="project" value="InterPro"/>
</dbReference>
<dbReference type="FunFam" id="1.25.10.10:FF:000663">
    <property type="entry name" value="Serine/threonine protein phosphatase 2A regulatory subunit"/>
    <property type="match status" value="1"/>
</dbReference>
<dbReference type="Gene3D" id="1.25.10.10">
    <property type="entry name" value="Leucine-rich Repeat Variant"/>
    <property type="match status" value="1"/>
</dbReference>
<dbReference type="InterPro" id="IPR011989">
    <property type="entry name" value="ARM-like"/>
</dbReference>
<dbReference type="InterPro" id="IPR016024">
    <property type="entry name" value="ARM-type_fold"/>
</dbReference>
<dbReference type="InterPro" id="IPR002554">
    <property type="entry name" value="PP2A_B56"/>
</dbReference>
<dbReference type="PANTHER" id="PTHR10257">
    <property type="entry name" value="SERINE/THREONINE PROTEIN PHOSPHATASE 2A PP2A REGULATORY SUBUNIT B"/>
    <property type="match status" value="1"/>
</dbReference>
<dbReference type="PANTHER" id="PTHR10257:SF60">
    <property type="entry name" value="SERINE_THREONINE PROTEIN PHOSPHATASE 2A 55 KDA REGULATORY SUBUNIT B' DELTA ISOFORM"/>
    <property type="match status" value="1"/>
</dbReference>
<dbReference type="Pfam" id="PF01603">
    <property type="entry name" value="B56"/>
    <property type="match status" value="1"/>
</dbReference>
<dbReference type="PIRSF" id="PIRSF028043">
    <property type="entry name" value="PP2A_B56"/>
    <property type="match status" value="1"/>
</dbReference>
<dbReference type="SUPFAM" id="SSF48371">
    <property type="entry name" value="ARM repeat"/>
    <property type="match status" value="1"/>
</dbReference>
<organism>
    <name type="scientific">Arabidopsis thaliana</name>
    <name type="common">Mouse-ear cress</name>
    <dbReference type="NCBI Taxonomy" id="3702"/>
    <lineage>
        <taxon>Eukaryota</taxon>
        <taxon>Viridiplantae</taxon>
        <taxon>Streptophyta</taxon>
        <taxon>Embryophyta</taxon>
        <taxon>Tracheophyta</taxon>
        <taxon>Spermatophyta</taxon>
        <taxon>Magnoliopsida</taxon>
        <taxon>eudicotyledons</taxon>
        <taxon>Gunneridae</taxon>
        <taxon>Pentapetalae</taxon>
        <taxon>rosids</taxon>
        <taxon>malvids</taxon>
        <taxon>Brassicales</taxon>
        <taxon>Brassicaceae</taxon>
        <taxon>Camelineae</taxon>
        <taxon>Arabidopsis</taxon>
    </lineage>
</organism>
<evidence type="ECO:0000250" key="1">
    <source>
        <dbReference type="UniProtKB" id="Q13362"/>
    </source>
</evidence>
<evidence type="ECO:0000269" key="2">
    <source>
    </source>
</evidence>
<evidence type="ECO:0000269" key="3">
    <source>
    </source>
</evidence>
<evidence type="ECO:0000269" key="4">
    <source>
    </source>
</evidence>
<evidence type="ECO:0000305" key="5"/>
<evidence type="ECO:0000305" key="6">
    <source>
    </source>
</evidence>
<proteinExistence type="evidence at protein level"/>
<keyword id="KW-0963">Cytoplasm</keyword>
<keyword id="KW-1185">Reference proteome</keyword>
<feature type="chain" id="PRO_0000071463" description="Serine/threonine protein phosphatase 2A 55 kDa regulatory subunit B' delta isoform">
    <location>
        <begin position="1"/>
        <end position="477"/>
    </location>
</feature>
<comment type="function">
    <text evidence="1">The B regulatory subunit may modulate substrate selectivity and catalytic activity, and may also direct the localization of the catalytic enzyme to a particular subcellular compartment.</text>
</comment>
<comment type="subunit">
    <text evidence="3 6">PP2A consists of a common heteromeric enzyme, composed of a catalytic subunit (subunits C), a constant regulatory subunit (subunit A), and a variety of regulatory subunits such as subunits B (the R2/B/PR55/B55, R3/B''/PR72/PR130/PR59 and R5/B'/B56 families) (Probable). Interacts with SRK2E/OST1 (PubMed:26175513).</text>
</comment>
<comment type="subcellular location">
    <subcellularLocation>
        <location evidence="4">Cytoplasm</location>
    </subcellularLocation>
</comment>
<comment type="tissue specificity">
    <text evidence="2">Expressed ubiquitously.</text>
</comment>
<comment type="induction">
    <text evidence="4">Induced by epibrassinolide.</text>
</comment>
<comment type="similarity">
    <text evidence="5">Belongs to the phosphatase 2A regulatory subunit B56 family.</text>
</comment>
<accession>Q9ZQY6</accession>
<reference key="1">
    <citation type="journal article" date="1999" name="Eur. J. Biochem.">
        <title>Molecular characterization of the B' regulatory subunit gene family of Arabidopsis protein phosphatase 2A.</title>
        <authorList>
            <person name="Haynes J.G."/>
            <person name="Hartung A.J."/>
            <person name="Hendershot J.D. III"/>
            <person name="Passingham R.S."/>
            <person name="Rundle S.J."/>
        </authorList>
    </citation>
    <scope>NUCLEOTIDE SEQUENCE [MRNA]</scope>
    <scope>TISSUE SPECIFICITY</scope>
    <scope>INTERACTION WITH PP2AA1</scope>
    <source>
        <strain>cv. Columbia</strain>
    </source>
</reference>
<reference key="2">
    <citation type="journal article" date="2000" name="DNA Res.">
        <title>Structural analysis of Arabidopsis thaliana chromosome 3. I. Sequence features of the regions of 4,504,864 bp covered by sixty P1 and TAC clones.</title>
        <authorList>
            <person name="Sato S."/>
            <person name="Nakamura Y."/>
            <person name="Kaneko T."/>
            <person name="Katoh T."/>
            <person name="Asamizu E."/>
            <person name="Tabata S."/>
        </authorList>
    </citation>
    <scope>NUCLEOTIDE SEQUENCE [LARGE SCALE GENOMIC DNA]</scope>
    <source>
        <strain>cv. Columbia</strain>
    </source>
</reference>
<reference key="3">
    <citation type="journal article" date="2017" name="Plant J.">
        <title>Araport11: a complete reannotation of the Arabidopsis thaliana reference genome.</title>
        <authorList>
            <person name="Cheng C.Y."/>
            <person name="Krishnakumar V."/>
            <person name="Chan A.P."/>
            <person name="Thibaud-Nissen F."/>
            <person name="Schobel S."/>
            <person name="Town C.D."/>
        </authorList>
    </citation>
    <scope>GENOME REANNOTATION</scope>
    <source>
        <strain>cv. Columbia</strain>
    </source>
</reference>
<reference key="4">
    <citation type="journal article" date="2003" name="Science">
        <title>Empirical analysis of transcriptional activity in the Arabidopsis genome.</title>
        <authorList>
            <person name="Yamada K."/>
            <person name="Lim J."/>
            <person name="Dale J.M."/>
            <person name="Chen H."/>
            <person name="Shinn P."/>
            <person name="Palm C.J."/>
            <person name="Southwick A.M."/>
            <person name="Wu H.C."/>
            <person name="Kim C.J."/>
            <person name="Nguyen M."/>
            <person name="Pham P.K."/>
            <person name="Cheuk R.F."/>
            <person name="Karlin-Newmann G."/>
            <person name="Liu S.X."/>
            <person name="Lam B."/>
            <person name="Sakano H."/>
            <person name="Wu T."/>
            <person name="Yu G."/>
            <person name="Miranda M."/>
            <person name="Quach H.L."/>
            <person name="Tripp M."/>
            <person name="Chang C.H."/>
            <person name="Lee J.M."/>
            <person name="Toriumi M.J."/>
            <person name="Chan M.M."/>
            <person name="Tang C.C."/>
            <person name="Onodera C.S."/>
            <person name="Deng J.M."/>
            <person name="Akiyama K."/>
            <person name="Ansari Y."/>
            <person name="Arakawa T."/>
            <person name="Banh J."/>
            <person name="Banno F."/>
            <person name="Bowser L."/>
            <person name="Brooks S.Y."/>
            <person name="Carninci P."/>
            <person name="Chao Q."/>
            <person name="Choy N."/>
            <person name="Enju A."/>
            <person name="Goldsmith A.D."/>
            <person name="Gurjal M."/>
            <person name="Hansen N.F."/>
            <person name="Hayashizaki Y."/>
            <person name="Johnson-Hopson C."/>
            <person name="Hsuan V.W."/>
            <person name="Iida K."/>
            <person name="Karnes M."/>
            <person name="Khan S."/>
            <person name="Koesema E."/>
            <person name="Ishida J."/>
            <person name="Jiang P.X."/>
            <person name="Jones T."/>
            <person name="Kawai J."/>
            <person name="Kamiya A."/>
            <person name="Meyers C."/>
            <person name="Nakajima M."/>
            <person name="Narusaka M."/>
            <person name="Seki M."/>
            <person name="Sakurai T."/>
            <person name="Satou M."/>
            <person name="Tamse R."/>
            <person name="Vaysberg M."/>
            <person name="Wallender E.K."/>
            <person name="Wong C."/>
            <person name="Yamamura Y."/>
            <person name="Yuan S."/>
            <person name="Shinozaki K."/>
            <person name="Davis R.W."/>
            <person name="Theologis A."/>
            <person name="Ecker J.R."/>
        </authorList>
    </citation>
    <scope>NUCLEOTIDE SEQUENCE [LARGE SCALE MRNA]</scope>
    <source>
        <strain>cv. Columbia</strain>
    </source>
</reference>
<reference key="5">
    <citation type="journal article" date="2002" name="Plant Physiol.">
        <title>Molecular characterization and evolution of the protein phosphatase 2A B' regulatory subunit family in plants.</title>
        <authorList>
            <person name="Terol J."/>
            <person name="Bargues M."/>
            <person name="Carrasco P."/>
            <person name="Perez-Alonso M."/>
            <person name="Paricio N."/>
        </authorList>
    </citation>
    <scope>NOMENCLATURE</scope>
</reference>
<reference key="6">
    <citation type="journal article" date="2015" name="Plant Physiol.">
        <title>Identification of Open Stomata1-interacting proteins reveals interactions with sucrose non-fermenting1-related protein kinases2 and with type 2a protein phosphatases that function in abscisic acid responses.</title>
        <authorList>
            <person name="Waadt R."/>
            <person name="Manalansan B."/>
            <person name="Rauniyar N."/>
            <person name="Munemasa S."/>
            <person name="Booker M.A."/>
            <person name="Brandt B."/>
            <person name="Waadt C."/>
            <person name="Nusinow D.A."/>
            <person name="Kay S.A."/>
            <person name="Kunz H.H."/>
            <person name="Schumacher K."/>
            <person name="DeLong A."/>
            <person name="Yates J.R. III"/>
            <person name="Schroeder J.I."/>
        </authorList>
    </citation>
    <scope>IDENTIFICATION BY MASS SPECTROMETRY</scope>
    <scope>INTERACTION WITH SRK2E/OST1</scope>
</reference>
<reference key="7">
    <citation type="journal article" date="2016" name="Mol. Plant">
        <title>The brassinosteroid-activated BRI1 receptor kinase is switched off by dephosphorylation mediated by cytoplasm-localized PP2A B' subunits.</title>
        <authorList>
            <person name="Wang R."/>
            <person name="Liu M."/>
            <person name="Yuan M."/>
            <person name="Oses-Prieto J.A."/>
            <person name="Cai X."/>
            <person name="Sun Y."/>
            <person name="Burlingame A.L."/>
            <person name="Wang Z.Y."/>
            <person name="Tang W."/>
        </authorList>
    </citation>
    <scope>SUBCELLULAR LOCATION</scope>
    <scope>INDUCTION BY EPIBRASSINOLIDE</scope>
</reference>
<protein>
    <recommendedName>
        <fullName>Serine/threonine protein phosphatase 2A 55 kDa regulatory subunit B' delta isoform</fullName>
        <shortName>AtB' delta</shortName>
        <shortName>PP2A, B' subunit, delta isoform</shortName>
    </recommendedName>
</protein>